<organism>
    <name type="scientific">Xenopus laevis</name>
    <name type="common">African clawed frog</name>
    <dbReference type="NCBI Taxonomy" id="8355"/>
    <lineage>
        <taxon>Eukaryota</taxon>
        <taxon>Metazoa</taxon>
        <taxon>Chordata</taxon>
        <taxon>Craniata</taxon>
        <taxon>Vertebrata</taxon>
        <taxon>Euteleostomi</taxon>
        <taxon>Amphibia</taxon>
        <taxon>Batrachia</taxon>
        <taxon>Anura</taxon>
        <taxon>Pipoidea</taxon>
        <taxon>Pipidae</taxon>
        <taxon>Xenopodinae</taxon>
        <taxon>Xenopus</taxon>
        <taxon>Xenopus</taxon>
    </lineage>
</organism>
<dbReference type="EC" id="3.1.-.-" evidence="2"/>
<dbReference type="EMBL" id="X69977">
    <property type="protein sequence ID" value="CAA49597.1"/>
    <property type="molecule type" value="mRNA"/>
</dbReference>
<dbReference type="PIR" id="S35994">
    <property type="entry name" value="S35994"/>
</dbReference>
<dbReference type="SMR" id="P14629"/>
<dbReference type="AGR" id="Xenbase:XB-GENE-960384"/>
<dbReference type="Xenbase" id="XB-GENE-960384">
    <property type="gene designation" value="ercc5.L"/>
</dbReference>
<dbReference type="Proteomes" id="UP000186698">
    <property type="component" value="Unplaced"/>
</dbReference>
<dbReference type="GO" id="GO:0005694">
    <property type="term" value="C:chromosome"/>
    <property type="evidence" value="ECO:0007669"/>
    <property type="project" value="UniProtKB-SubCell"/>
</dbReference>
<dbReference type="GO" id="GO:0005634">
    <property type="term" value="C:nucleus"/>
    <property type="evidence" value="ECO:0000318"/>
    <property type="project" value="GO_Central"/>
</dbReference>
<dbReference type="GO" id="GO:0004520">
    <property type="term" value="F:DNA endonuclease activity"/>
    <property type="evidence" value="ECO:0000318"/>
    <property type="project" value="GO_Central"/>
</dbReference>
<dbReference type="GO" id="GO:0046872">
    <property type="term" value="F:metal ion binding"/>
    <property type="evidence" value="ECO:0007669"/>
    <property type="project" value="UniProtKB-KW"/>
</dbReference>
<dbReference type="GO" id="GO:0003697">
    <property type="term" value="F:single-stranded DNA binding"/>
    <property type="evidence" value="ECO:0000318"/>
    <property type="project" value="GO_Central"/>
</dbReference>
<dbReference type="GO" id="GO:0006289">
    <property type="term" value="P:nucleotide-excision repair"/>
    <property type="evidence" value="ECO:0007669"/>
    <property type="project" value="InterPro"/>
</dbReference>
<dbReference type="CDD" id="cd09904">
    <property type="entry name" value="H3TH_XPG"/>
    <property type="match status" value="1"/>
</dbReference>
<dbReference type="CDD" id="cd09868">
    <property type="entry name" value="PIN_XPG_RAD2"/>
    <property type="match status" value="2"/>
</dbReference>
<dbReference type="FunFam" id="3.40.50.1010:FF:000023">
    <property type="entry name" value="DNA repair protein complementing XP-G cells"/>
    <property type="match status" value="1"/>
</dbReference>
<dbReference type="FunFam" id="1.10.150.20:FF:000037">
    <property type="entry name" value="DNA repair protein complementing XP-G cells homolog"/>
    <property type="match status" value="1"/>
</dbReference>
<dbReference type="FunFam" id="3.40.50.1010:FF:000022">
    <property type="entry name" value="DNA repair protein complementing XP-G cells homolog"/>
    <property type="match status" value="1"/>
</dbReference>
<dbReference type="Gene3D" id="1.10.150.20">
    <property type="entry name" value="5' to 3' exonuclease, C-terminal subdomain"/>
    <property type="match status" value="1"/>
</dbReference>
<dbReference type="Gene3D" id="3.40.50.1010">
    <property type="entry name" value="5'-nuclease"/>
    <property type="match status" value="2"/>
</dbReference>
<dbReference type="InterPro" id="IPR036279">
    <property type="entry name" value="5-3_exonuclease_C_sf"/>
</dbReference>
<dbReference type="InterPro" id="IPR008918">
    <property type="entry name" value="HhH2"/>
</dbReference>
<dbReference type="InterPro" id="IPR029060">
    <property type="entry name" value="PIN-like_dom_sf"/>
</dbReference>
<dbReference type="InterPro" id="IPR006086">
    <property type="entry name" value="XPG-I_dom"/>
</dbReference>
<dbReference type="InterPro" id="IPR006084">
    <property type="entry name" value="XPG/Rad2"/>
</dbReference>
<dbReference type="InterPro" id="IPR001044">
    <property type="entry name" value="XPG/Rad2_eukaryotes"/>
</dbReference>
<dbReference type="InterPro" id="IPR019974">
    <property type="entry name" value="XPG_CS"/>
</dbReference>
<dbReference type="InterPro" id="IPR006085">
    <property type="entry name" value="XPG_DNA_repair_N"/>
</dbReference>
<dbReference type="NCBIfam" id="TIGR00600">
    <property type="entry name" value="rad2"/>
    <property type="match status" value="1"/>
</dbReference>
<dbReference type="PANTHER" id="PTHR16171:SF11">
    <property type="entry name" value="DNA EXCISION REPAIR PROTEIN ERCC-5"/>
    <property type="match status" value="1"/>
</dbReference>
<dbReference type="PANTHER" id="PTHR16171">
    <property type="entry name" value="DNA REPAIR PROTEIN COMPLEMENTING XP-G CELLS-RELATED"/>
    <property type="match status" value="1"/>
</dbReference>
<dbReference type="Pfam" id="PF00867">
    <property type="entry name" value="XPG_I"/>
    <property type="match status" value="1"/>
</dbReference>
<dbReference type="Pfam" id="PF00752">
    <property type="entry name" value="XPG_N"/>
    <property type="match status" value="1"/>
</dbReference>
<dbReference type="PRINTS" id="PR00853">
    <property type="entry name" value="XPGRADSUPER"/>
</dbReference>
<dbReference type="PRINTS" id="PR00066">
    <property type="entry name" value="XRODRMPGMNTG"/>
</dbReference>
<dbReference type="SMART" id="SM00279">
    <property type="entry name" value="HhH2"/>
    <property type="match status" value="1"/>
</dbReference>
<dbReference type="SMART" id="SM00484">
    <property type="entry name" value="XPGI"/>
    <property type="match status" value="1"/>
</dbReference>
<dbReference type="SMART" id="SM00485">
    <property type="entry name" value="XPGN"/>
    <property type="match status" value="1"/>
</dbReference>
<dbReference type="SUPFAM" id="SSF47807">
    <property type="entry name" value="5' to 3' exonuclease, C-terminal subdomain"/>
    <property type="match status" value="1"/>
</dbReference>
<dbReference type="SUPFAM" id="SSF88723">
    <property type="entry name" value="PIN domain-like"/>
    <property type="match status" value="1"/>
</dbReference>
<dbReference type="PROSITE" id="PS00841">
    <property type="entry name" value="XPG_1"/>
    <property type="match status" value="1"/>
</dbReference>
<dbReference type="PROSITE" id="PS00842">
    <property type="entry name" value="XPG_2"/>
    <property type="match status" value="1"/>
</dbReference>
<keyword id="KW-0158">Chromosome</keyword>
<keyword id="KW-0227">DNA damage</keyword>
<keyword id="KW-0234">DNA repair</keyword>
<keyword id="KW-0238">DNA-binding</keyword>
<keyword id="KW-0255">Endonuclease</keyword>
<keyword id="KW-0378">Hydrolase</keyword>
<keyword id="KW-0460">Magnesium</keyword>
<keyword id="KW-0479">Metal-binding</keyword>
<keyword id="KW-0540">Nuclease</keyword>
<keyword id="KW-0539">Nucleus</keyword>
<keyword id="KW-1185">Reference proteome</keyword>
<comment type="function">
    <text evidence="2">Single-stranded structure-specific DNA endonuclease involved in DNA excision repair. Makes the 3'incision in DNA nucleotide excision repair (NER). Binds and bends DNA repair bubble substrate and breaks base stacking at the single-strand/double-strand DNA junction of the DNA bubble. Plays a role in base excision repair (BER) by promoting the binding of DNA glycosylase to its substrate and increasing DNA glycosylase catalytic activity that removes oxidized pyrimidines from DNA. Involved in transcription-coupled nucleotide excision repair (TCR) which allows RNA polymerase II-blocking lesions to be rapidly removed from the transcribed strand of active genes. Required for DNA replication fork maintenance and preservation of genomic stability. Involved in homologous recombination repair (HRR) induced by DNA replication stress. During HRR, binds to the replication fork with high specificity and stabilizes it.</text>
</comment>
<comment type="cofactor">
    <cofactor evidence="2">
        <name>Mg(2+)</name>
        <dbReference type="ChEBI" id="CHEBI:18420"/>
    </cofactor>
    <text evidence="1">Binds 2 magnesium ions per subunit. They probably participate in the reaction catalyzed by the enzyme. May bind an additional third magnesium ion after substrate binding.</text>
</comment>
<comment type="subunit">
    <text evidence="2">Monomer. Homodimer.</text>
</comment>
<comment type="subcellular location">
    <subcellularLocation>
        <location evidence="2">Nucleus</location>
    </subcellularLocation>
    <subcellularLocation>
        <location evidence="2">Chromosome</location>
    </subcellularLocation>
</comment>
<comment type="domain">
    <text evidence="2">Both nuclear localization signals 1 and 2 act as a monopartite signal which binds to the high affinity site on importin-alpha.</text>
</comment>
<comment type="domain">
    <text evidence="2">Both the spacer region (also known as the recognition (R) domain) and C-terminal domain are required for stable binding to the DNA repair bubble. However, both domains are dispensable for incision of DNA bubble structures.</text>
</comment>
<comment type="similarity">
    <text evidence="5">Belongs to the XPG/RAD2 endonuclease family. XPG subfamily.</text>
</comment>
<protein>
    <recommendedName>
        <fullName evidence="5">DNA excision repair protein ERCC-5 homolog</fullName>
        <ecNumber evidence="2">3.1.-.-</ecNumber>
    </recommendedName>
    <alternativeName>
        <fullName>DNA repair protein complementing XP-G cells homolog</fullName>
    </alternativeName>
    <alternativeName>
        <fullName>Xeroderma pigmentosum group G-complementing protein homolog</fullName>
    </alternativeName>
</protein>
<proteinExistence type="evidence at transcript level"/>
<name>ERCC5_XENLA</name>
<gene>
    <name type="primary">ercc5</name>
    <name type="synonym">xpg</name>
    <name type="synonym">xpgc</name>
</gene>
<sequence>MGVQGLWKLLECSGRPINPGTLEGKILAVDISIWLNQAVKGARDRQGNAIQNAHLLTLFHRLCKLLFFRIRPIFVFDGEAPLLKRQTLAKRRQRTDKASNDARKTNEKLLRTFLKRQAIKAALSGNKQSNEELPSFSQVPRKETEDLYILPPLEDNENNSSEEEEEREWEERMNQKQRLQEDFFANPSSVDIESEEFKSLPPEVKHEILTDMKDFTKRRRTLFEAMPEDSSDFSQYQLKGLLKKNDLNKCIDNVRKELNQQYSGEVQAQFESEGGFLKEVETRRLVSEDDSHYILIKGIQSKQEEKKVDSPPQSITFNSSQTPKTYLDLKLASAHKTKPLQTSSAEAAPPSPRTLFAIQEAMAESWDHEKHEKPSVSGCEAEGNVSPRTLQAIYQVLAEDEAGESNKIKVVLQSDEERKPKTKVLVISSSDEEDDCLNYQDGTKTTLGASLIKSISPSSMQCQESTADSLPNYTRSKPVSQIEEPMADHNLQGDNCNVPNAKDKLIVPPSLGNVDKPIILSNTIPVNSEFRIPLLPVNMSMRETVIIPNNTGSLGSSRYISLERDATKQGFSDNPVGDLVRSPDEPALNASSALSDRKTSATQSLLCNNIECTEQSMVQGCSNTLDVTQTTQPSGGSEVNKPAEYNPQDKKVFGSNDSSAMYVPMTPESIIVSDEEFVNEKEDSDSDDSFIEVDSEFSTSNSQHVVFKEPGDTRETATNFQAVEEGNSGSQDIPLEHDSGEPHEQSNSEESKDLDDVSNEWQDISVEELESLENNLYVQQTSLQAQQQQQERIAATVTGQMCLESQELLQLFGIPYIVAPMEAEAQCAILDLTDQTSGTITDDSDIWLFGARHVYKNFFSQNKHVEYYQYADIHNQLGLDRSKLINLAYLLGSDYTEGIPTVGYVSAMEILNEFPGQGLEPLVKFKEWWSEAQKDKKMRPNPNDTKVKKKLRLLDLQQSFPNPAVASAYLKPVVDESKSAFSWGRPDLEQIREFCESRFGWYRLKTDEVLLPVLKQLNAQQTQLRIDSFFRLEQHEAAGLKSQRLRRAVTCMKRKERDVEAEEVEAAVAVMERECTNQRKGQKTNTKSQGTKRRKPTECSQEDQDPGGGFIGIELKTLSSKAYSSDGSSSDAEDLPSGLIDKQSQSGIVGRQKASNKVESSSSSDDEDRTVMVTAKPVFQGKKTKSKTMKETVKRK</sequence>
<reference key="1">
    <citation type="journal article" date="1993" name="Nature">
        <title>Complementation of the DNA repair defect in Xeroderma pigmentosum group G cells by a human cDNA related to yeast RAD2.</title>
        <authorList>
            <person name="Scherly D."/>
            <person name="Nouspikel T."/>
            <person name="Corlet J."/>
            <person name="Ucla C."/>
            <person name="Bairoch A."/>
            <person name="Clarkson S.G."/>
        </authorList>
    </citation>
    <scope>NUCLEOTIDE SEQUENCE [MRNA]</scope>
</reference>
<evidence type="ECO:0000250" key="1"/>
<evidence type="ECO:0000250" key="2">
    <source>
        <dbReference type="UniProtKB" id="P28715"/>
    </source>
</evidence>
<evidence type="ECO:0000250" key="3">
    <source>
        <dbReference type="UniProtKB" id="P39748"/>
    </source>
</evidence>
<evidence type="ECO:0000256" key="4">
    <source>
        <dbReference type="SAM" id="MobiDB-lite"/>
    </source>
</evidence>
<evidence type="ECO:0000305" key="5"/>
<feature type="chain" id="PRO_0000154033" description="DNA excision repair protein ERCC-5 homolog">
    <location>
        <begin position="1"/>
        <end position="1196"/>
    </location>
</feature>
<feature type="region of interest" description="N-domain" evidence="2">
    <location>
        <begin position="1"/>
        <end position="78"/>
    </location>
</feature>
<feature type="region of interest" description="DNA-binding; may bind to the undamaged single-strand DNA of the DNA repair bubble" evidence="2">
    <location>
        <begin position="31"/>
        <end position="67"/>
    </location>
</feature>
<feature type="region of interest" description="Spacer region" evidence="2">
    <location>
        <begin position="79"/>
        <end position="818"/>
    </location>
</feature>
<feature type="region of interest" description="Disordered" evidence="4">
    <location>
        <begin position="152"/>
        <end position="176"/>
    </location>
</feature>
<feature type="region of interest" description="Disordered" evidence="4">
    <location>
        <begin position="302"/>
        <end position="321"/>
    </location>
</feature>
<feature type="region of interest" description="Disordered" evidence="4">
    <location>
        <begin position="629"/>
        <end position="661"/>
    </location>
</feature>
<feature type="region of interest" description="Disordered" evidence="4">
    <location>
        <begin position="722"/>
        <end position="758"/>
    </location>
</feature>
<feature type="region of interest" description="I-domain" evidence="2">
    <location>
        <begin position="819"/>
        <end position="914"/>
    </location>
</feature>
<feature type="region of interest" description="DNA-binding; may bind to the undamaged single-strand DNA of the DNA repair bubble" evidence="2">
    <location>
        <begin position="853"/>
        <end position="869"/>
    </location>
</feature>
<feature type="region of interest" description="DNA-binding; H2TH (helix-2turn-helix) motif which binds double-stranded DNA" evidence="2">
    <location>
        <begin position="881"/>
        <end position="913"/>
    </location>
</feature>
<feature type="region of interest" description="DNA-binding; may bind double-stranded DNA" evidence="2">
    <location>
        <begin position="945"/>
        <end position="951"/>
    </location>
</feature>
<feature type="region of interest" description="Disordered" evidence="4">
    <location>
        <begin position="1075"/>
        <end position="1196"/>
    </location>
</feature>
<feature type="short sequence motif" description="Nuclear localization signal 1" evidence="2">
    <location>
        <begin position="1079"/>
        <end position="1095"/>
    </location>
</feature>
<feature type="short sequence motif" description="Nuclear localization signal 2" evidence="2">
    <location>
        <begin position="1179"/>
        <end position="1196"/>
    </location>
</feature>
<feature type="compositionally biased region" description="Acidic residues" evidence="4">
    <location>
        <begin position="154"/>
        <end position="168"/>
    </location>
</feature>
<feature type="compositionally biased region" description="Polar residues" evidence="4">
    <location>
        <begin position="311"/>
        <end position="321"/>
    </location>
</feature>
<feature type="compositionally biased region" description="Polar residues" evidence="4">
    <location>
        <begin position="722"/>
        <end position="731"/>
    </location>
</feature>
<feature type="compositionally biased region" description="Basic and acidic residues" evidence="4">
    <location>
        <begin position="734"/>
        <end position="755"/>
    </location>
</feature>
<feature type="compositionally biased region" description="Low complexity" evidence="4">
    <location>
        <begin position="1119"/>
        <end position="1130"/>
    </location>
</feature>
<feature type="compositionally biased region" description="Polar residues" evidence="4">
    <location>
        <begin position="1142"/>
        <end position="1158"/>
    </location>
</feature>
<feature type="binding site" evidence="3">
    <location>
        <position position="30"/>
    </location>
    <ligand>
        <name>Mg(2+)</name>
        <dbReference type="ChEBI" id="CHEBI:18420"/>
        <label>1</label>
    </ligand>
</feature>
<feature type="binding site" evidence="3">
    <location>
        <position position="77"/>
    </location>
    <ligand>
        <name>Mg(2+)</name>
        <dbReference type="ChEBI" id="CHEBI:18420"/>
        <label>1</label>
    </ligand>
</feature>
<feature type="binding site" evidence="3">
    <location>
        <position position="822"/>
    </location>
    <ligand>
        <name>Mg(2+)</name>
        <dbReference type="ChEBI" id="CHEBI:18420"/>
        <label>1</label>
    </ligand>
</feature>
<feature type="binding site" evidence="3">
    <location>
        <position position="824"/>
    </location>
    <ligand>
        <name>Mg(2+)</name>
        <dbReference type="ChEBI" id="CHEBI:18420"/>
        <label>1</label>
    </ligand>
</feature>
<feature type="binding site" evidence="3">
    <location>
        <position position="843"/>
    </location>
    <ligand>
        <name>Mg(2+)</name>
        <dbReference type="ChEBI" id="CHEBI:18420"/>
        <label>2</label>
    </ligand>
</feature>
<feature type="binding site" evidence="3">
    <location>
        <position position="845"/>
    </location>
    <ligand>
        <name>Mg(2+)</name>
        <dbReference type="ChEBI" id="CHEBI:18420"/>
        <label>2</label>
    </ligand>
</feature>
<feature type="binding site" evidence="3">
    <location>
        <position position="894"/>
    </location>
    <ligand>
        <name>Mg(2+)</name>
        <dbReference type="ChEBI" id="CHEBI:18420"/>
        <label>2</label>
    </ligand>
</feature>
<accession>P14629</accession>